<sequence length="416" mass="43302">MNKQSWLLNLSLLKTHPAFRAVFLARFISIVSLGLLGVAVPVQIQMMTHSTWQVGLSVTLTGGAMFVGLMVGGVLADRYERKKVILLARGTCGIGFIGLCLNALLPEPSLLAIYLLGLWDGFFASLGVTALLAATPALVGRENLMQAGALTMLTVRLGSVISPMIGGLLLATGGVAWNYGLAAAGTFITLLPLLSLPALPPPPQPREHPLKSLLAGFRFLLASPLVGGIALLGGLLTMASAVRVLYPALADNWQMSAAEIGFLYAAIPLGAAIGALTSGKLAHSARPGLLMLLSTLGSFLAIGLFGLMPMWILGVVCLALFGWLSAVSSLLQYTMLQTQTPEAMLGRINGLWTAQNVTGDAIGAALLGGLGAMMTPVASASASGFGLLIIGVLLLLVLVELRRFRQTPPQVTASDS</sequence>
<organism>
    <name type="scientific">Shigella boydii serotype 18 (strain CDC 3083-94 / BS512)</name>
    <dbReference type="NCBI Taxonomy" id="344609"/>
    <lineage>
        <taxon>Bacteria</taxon>
        <taxon>Pseudomonadati</taxon>
        <taxon>Pseudomonadota</taxon>
        <taxon>Gammaproteobacteria</taxon>
        <taxon>Enterobacterales</taxon>
        <taxon>Enterobacteriaceae</taxon>
        <taxon>Shigella</taxon>
    </lineage>
</organism>
<evidence type="ECO:0000255" key="1">
    <source>
        <dbReference type="HAMAP-Rule" id="MF_01436"/>
    </source>
</evidence>
<reference key="1">
    <citation type="submission" date="2008-05" db="EMBL/GenBank/DDBJ databases">
        <title>Complete sequence of Shigella boydii serotype 18 strain BS512.</title>
        <authorList>
            <person name="Rasko D.A."/>
            <person name="Rosovitz M."/>
            <person name="Maurelli A.T."/>
            <person name="Myers G."/>
            <person name="Seshadri R."/>
            <person name="Cer R."/>
            <person name="Jiang L."/>
            <person name="Ravel J."/>
            <person name="Sebastian Y."/>
        </authorList>
    </citation>
    <scope>NUCLEOTIDE SEQUENCE [LARGE SCALE GENOMIC DNA]</scope>
    <source>
        <strain>CDC 3083-94 / BS512</strain>
    </source>
</reference>
<dbReference type="EMBL" id="CP001063">
    <property type="protein sequence ID" value="ACD08550.1"/>
    <property type="molecule type" value="Genomic_DNA"/>
</dbReference>
<dbReference type="RefSeq" id="WP_001041802.1">
    <property type="nucleotide sequence ID" value="NC_010658.1"/>
</dbReference>
<dbReference type="SMR" id="B2TTF0"/>
<dbReference type="STRING" id="344609.SbBS512_E0493"/>
<dbReference type="KEGG" id="sbc:SbBS512_E0493"/>
<dbReference type="HOGENOM" id="CLU_034180_11_0_6"/>
<dbReference type="Proteomes" id="UP000001030">
    <property type="component" value="Chromosome"/>
</dbReference>
<dbReference type="GO" id="GO:0005886">
    <property type="term" value="C:plasma membrane"/>
    <property type="evidence" value="ECO:0007669"/>
    <property type="project" value="UniProtKB-SubCell"/>
</dbReference>
<dbReference type="GO" id="GO:0042931">
    <property type="term" value="F:enterobactin transmembrane transporter activity"/>
    <property type="evidence" value="ECO:0007669"/>
    <property type="project" value="InterPro"/>
</dbReference>
<dbReference type="CDD" id="cd06173">
    <property type="entry name" value="MFS_MefA_like"/>
    <property type="match status" value="1"/>
</dbReference>
<dbReference type="FunFam" id="1.20.1250.20:FF:000056">
    <property type="entry name" value="Enterobactin exporter EntS"/>
    <property type="match status" value="1"/>
</dbReference>
<dbReference type="Gene3D" id="1.20.1250.20">
    <property type="entry name" value="MFS general substrate transporter like domains"/>
    <property type="match status" value="1"/>
</dbReference>
<dbReference type="HAMAP" id="MF_01436">
    <property type="entry name" value="MFS_EntS"/>
    <property type="match status" value="1"/>
</dbReference>
<dbReference type="InterPro" id="IPR023722">
    <property type="entry name" value="Enterobactin_exp_EntS"/>
</dbReference>
<dbReference type="InterPro" id="IPR020846">
    <property type="entry name" value="MFS_dom"/>
</dbReference>
<dbReference type="InterPro" id="IPR036259">
    <property type="entry name" value="MFS_trans_sf"/>
</dbReference>
<dbReference type="InterPro" id="IPR010290">
    <property type="entry name" value="TM_effector"/>
</dbReference>
<dbReference type="NCBIfam" id="NF007792">
    <property type="entry name" value="PRK10489.1"/>
    <property type="match status" value="1"/>
</dbReference>
<dbReference type="PANTHER" id="PTHR23513:SF9">
    <property type="entry name" value="ENTEROBACTIN EXPORTER ENTS"/>
    <property type="match status" value="1"/>
</dbReference>
<dbReference type="PANTHER" id="PTHR23513">
    <property type="entry name" value="INTEGRAL MEMBRANE EFFLUX PROTEIN-RELATED"/>
    <property type="match status" value="1"/>
</dbReference>
<dbReference type="Pfam" id="PF05977">
    <property type="entry name" value="MFS_3"/>
    <property type="match status" value="1"/>
</dbReference>
<dbReference type="SUPFAM" id="SSF103473">
    <property type="entry name" value="MFS general substrate transporter"/>
    <property type="match status" value="1"/>
</dbReference>
<dbReference type="PROSITE" id="PS50850">
    <property type="entry name" value="MFS"/>
    <property type="match status" value="1"/>
</dbReference>
<protein>
    <recommendedName>
        <fullName evidence="1">Enterobactin exporter EntS</fullName>
    </recommendedName>
</protein>
<feature type="chain" id="PRO_1000145850" description="Enterobactin exporter EntS">
    <location>
        <begin position="1"/>
        <end position="416"/>
    </location>
</feature>
<feature type="topological domain" description="Cytoplasmic" evidence="1">
    <location>
        <begin position="1"/>
        <end position="21"/>
    </location>
</feature>
<feature type="transmembrane region" description="Helical" evidence="1">
    <location>
        <begin position="22"/>
        <end position="42"/>
    </location>
</feature>
<feature type="topological domain" description="Periplasmic" evidence="1">
    <location>
        <begin position="43"/>
        <end position="55"/>
    </location>
</feature>
<feature type="transmembrane region" description="Helical" evidence="1">
    <location>
        <begin position="56"/>
        <end position="76"/>
    </location>
</feature>
<feature type="topological domain" description="Cytoplasmic" evidence="1">
    <location>
        <begin position="77"/>
        <end position="83"/>
    </location>
</feature>
<feature type="transmembrane region" description="Helical" evidence="1">
    <location>
        <begin position="84"/>
        <end position="104"/>
    </location>
</feature>
<feature type="topological domain" description="Periplasmic" evidence="1">
    <location>
        <begin position="105"/>
        <end position="109"/>
    </location>
</feature>
<feature type="transmembrane region" description="Helical" evidence="1">
    <location>
        <begin position="110"/>
        <end position="130"/>
    </location>
</feature>
<feature type="topological domain" description="Cytoplasmic" evidence="1">
    <location>
        <begin position="131"/>
        <end position="156"/>
    </location>
</feature>
<feature type="transmembrane region" description="Helical" evidence="1">
    <location>
        <begin position="157"/>
        <end position="177"/>
    </location>
</feature>
<feature type="topological domain" description="Periplasmic" evidence="1">
    <location>
        <position position="178"/>
    </location>
</feature>
<feature type="transmembrane region" description="Helical" evidence="1">
    <location>
        <begin position="179"/>
        <end position="199"/>
    </location>
</feature>
<feature type="topological domain" description="Cytoplasmic" evidence="1">
    <location>
        <begin position="200"/>
        <end position="218"/>
    </location>
</feature>
<feature type="transmembrane region" description="Helical" evidence="1">
    <location>
        <begin position="219"/>
        <end position="239"/>
    </location>
</feature>
<feature type="topological domain" description="Periplasmic" evidence="1">
    <location>
        <begin position="240"/>
        <end position="256"/>
    </location>
</feature>
<feature type="transmembrane region" description="Helical" evidence="1">
    <location>
        <begin position="257"/>
        <end position="277"/>
    </location>
</feature>
<feature type="topological domain" description="Cytoplasmic" evidence="1">
    <location>
        <begin position="278"/>
        <end position="287"/>
    </location>
</feature>
<feature type="transmembrane region" description="Helical" evidence="1">
    <location>
        <begin position="288"/>
        <end position="307"/>
    </location>
</feature>
<feature type="topological domain" description="Periplasmic" evidence="1">
    <location>
        <begin position="308"/>
        <end position="313"/>
    </location>
</feature>
<feature type="transmembrane region" description="Helical" evidence="1">
    <location>
        <begin position="314"/>
        <end position="336"/>
    </location>
</feature>
<feature type="topological domain" description="Cytoplasmic" evidence="1">
    <location>
        <begin position="337"/>
        <end position="356"/>
    </location>
</feature>
<feature type="transmembrane region" description="Helical" evidence="1">
    <location>
        <begin position="357"/>
        <end position="377"/>
    </location>
</feature>
<feature type="topological domain" description="Periplasmic" evidence="1">
    <location>
        <position position="378"/>
    </location>
</feature>
<feature type="transmembrane region" description="Helical" evidence="1">
    <location>
        <begin position="379"/>
        <end position="399"/>
    </location>
</feature>
<feature type="topological domain" description="Cytoplasmic" evidence="1">
    <location>
        <begin position="400"/>
        <end position="416"/>
    </location>
</feature>
<name>ENTS_SHIB3</name>
<proteinExistence type="inferred from homology"/>
<keyword id="KW-0997">Cell inner membrane</keyword>
<keyword id="KW-1003">Cell membrane</keyword>
<keyword id="KW-0472">Membrane</keyword>
<keyword id="KW-1185">Reference proteome</keyword>
<keyword id="KW-0812">Transmembrane</keyword>
<keyword id="KW-1133">Transmembrane helix</keyword>
<keyword id="KW-0813">Transport</keyword>
<comment type="function">
    <text evidence="1">Component of an export pathway for enterobactin.</text>
</comment>
<comment type="subcellular location">
    <subcellularLocation>
        <location evidence="1">Cell inner membrane</location>
        <topology evidence="1">Multi-pass membrane protein</topology>
    </subcellularLocation>
</comment>
<comment type="similarity">
    <text evidence="1">Belongs to the major facilitator superfamily. EntS (TC 2.A.1.38) family.</text>
</comment>
<gene>
    <name evidence="1" type="primary">entS</name>
    <name type="ordered locus">SbBS512_E0493</name>
</gene>
<accession>B2TTF0</accession>